<feature type="chain" id="PRO_0000100061" description="Dehydrin Rab15">
    <location>
        <begin position="1"/>
        <end position="149"/>
    </location>
</feature>
<feature type="region of interest" description="Disordered" evidence="1">
    <location>
        <begin position="1"/>
        <end position="149"/>
    </location>
</feature>
<feature type="compositionally biased region" description="Basic and acidic residues" evidence="1">
    <location>
        <begin position="78"/>
        <end position="93"/>
    </location>
</feature>
<feature type="compositionally biased region" description="Gly residues" evidence="1">
    <location>
        <begin position="100"/>
        <end position="117"/>
    </location>
</feature>
<feature type="compositionally biased region" description="Basic and acidic residues" evidence="1">
    <location>
        <begin position="132"/>
        <end position="149"/>
    </location>
</feature>
<accession>Q00742</accession>
<name>DHR15_WHEAT</name>
<organism>
    <name type="scientific">Triticum aestivum</name>
    <name type="common">Wheat</name>
    <dbReference type="NCBI Taxonomy" id="4565"/>
    <lineage>
        <taxon>Eukaryota</taxon>
        <taxon>Viridiplantae</taxon>
        <taxon>Streptophyta</taxon>
        <taxon>Embryophyta</taxon>
        <taxon>Tracheophyta</taxon>
        <taxon>Spermatophyta</taxon>
        <taxon>Magnoliopsida</taxon>
        <taxon>Liliopsida</taxon>
        <taxon>Poales</taxon>
        <taxon>Poaceae</taxon>
        <taxon>BOP clade</taxon>
        <taxon>Pooideae</taxon>
        <taxon>Triticodae</taxon>
        <taxon>Triticeae</taxon>
        <taxon>Triticinae</taxon>
        <taxon>Triticum</taxon>
    </lineage>
</organism>
<proteinExistence type="evidence at transcript level"/>
<gene>
    <name type="primary">RAB15</name>
</gene>
<keyword id="KW-1185">Reference proteome</keyword>
<keyword id="KW-0346">Stress response</keyword>
<evidence type="ECO:0000256" key="1">
    <source>
        <dbReference type="SAM" id="MobiDB-lite"/>
    </source>
</evidence>
<evidence type="ECO:0000305" key="2"/>
<reference key="1">
    <citation type="journal article" date="1992" name="Plant Mol. Biol.">
        <title>DNA sequence of an ABA-responsive gene (rab 15) from water-stressed wheat roots.</title>
        <authorList>
            <person name="King S.W."/>
            <person name="Joshi C.P."/>
            <person name="Nguyen H.T."/>
        </authorList>
    </citation>
    <scope>NUCLEOTIDE SEQUENCE [MRNA]</scope>
    <source>
        <strain>cv. TAM W-101</strain>
        <tissue>Root</tissue>
    </source>
</reference>
<sequence length="149" mass="15766">MEFQGQHDNPANRVDEYGNPFPLAGAWGERTRSRHRRAVPGPQGRAQDRWILHRSGSSSSSSSSEDDGMGGRRKKGMKEKIKEKLPGGHKDNQQHMATGTGTGGAYGPGTGTGGAYGQQGHTGMAGAGTGTGEKKGIMDKIKEKLPGQH</sequence>
<comment type="induction">
    <text>By abscisic acid (ABA) and water stress.</text>
</comment>
<comment type="similarity">
    <text evidence="2">Belongs to the plant dehydrin family.</text>
</comment>
<dbReference type="EMBL" id="X59133">
    <property type="protein sequence ID" value="CAA41850.1"/>
    <property type="molecule type" value="mRNA"/>
</dbReference>
<dbReference type="PIR" id="S19130">
    <property type="entry name" value="S19130"/>
</dbReference>
<dbReference type="STRING" id="4565.Q00742"/>
<dbReference type="PaxDb" id="4565-Traes_5AL_E4E5B111A.1"/>
<dbReference type="Proteomes" id="UP000019116">
    <property type="component" value="Unplaced"/>
</dbReference>
<dbReference type="ExpressionAtlas" id="Q00742">
    <property type="expression patterns" value="baseline and differential"/>
</dbReference>
<dbReference type="GO" id="GO:0009631">
    <property type="term" value="P:cold acclimation"/>
    <property type="evidence" value="ECO:0000318"/>
    <property type="project" value="GO_Central"/>
</dbReference>
<dbReference type="GO" id="GO:0009737">
    <property type="term" value="P:response to abscisic acid"/>
    <property type="evidence" value="ECO:0000318"/>
    <property type="project" value="GO_Central"/>
</dbReference>
<dbReference type="GO" id="GO:0009414">
    <property type="term" value="P:response to water deprivation"/>
    <property type="evidence" value="ECO:0000318"/>
    <property type="project" value="GO_Central"/>
</dbReference>
<dbReference type="InterPro" id="IPR000167">
    <property type="entry name" value="Dehydrin"/>
</dbReference>
<dbReference type="InterPro" id="IPR030513">
    <property type="entry name" value="Dehydrin_CS"/>
</dbReference>
<dbReference type="PANTHER" id="PTHR33346:SF33">
    <property type="entry name" value="DEHYDRIN RAB15"/>
    <property type="match status" value="1"/>
</dbReference>
<dbReference type="PANTHER" id="PTHR33346">
    <property type="entry name" value="DEHYDRIN XERO 2-RELATED"/>
    <property type="match status" value="1"/>
</dbReference>
<dbReference type="Pfam" id="PF00257">
    <property type="entry name" value="Dehydrin"/>
    <property type="match status" value="1"/>
</dbReference>
<dbReference type="PROSITE" id="PS00315">
    <property type="entry name" value="DEHYDRIN_1"/>
    <property type="match status" value="1"/>
</dbReference>
<dbReference type="PROSITE" id="PS00823">
    <property type="entry name" value="DEHYDRIN_2"/>
    <property type="match status" value="2"/>
</dbReference>
<protein>
    <recommendedName>
        <fullName>Dehydrin Rab15</fullName>
    </recommendedName>
</protein>